<evidence type="ECO:0000255" key="1">
    <source>
        <dbReference type="HAMAP-Rule" id="MF_00281"/>
    </source>
</evidence>
<organism>
    <name type="scientific">Streptococcus pneumoniae (strain 70585)</name>
    <dbReference type="NCBI Taxonomy" id="488221"/>
    <lineage>
        <taxon>Bacteria</taxon>
        <taxon>Bacillati</taxon>
        <taxon>Bacillota</taxon>
        <taxon>Bacilli</taxon>
        <taxon>Lactobacillales</taxon>
        <taxon>Streptococcaceae</taxon>
        <taxon>Streptococcus</taxon>
    </lineage>
</organism>
<gene>
    <name evidence="1" type="primary">pheS</name>
    <name type="ordered locus">SP70585_0643</name>
</gene>
<dbReference type="EC" id="6.1.1.20" evidence="1"/>
<dbReference type="EMBL" id="CP000918">
    <property type="protein sequence ID" value="ACO16094.1"/>
    <property type="molecule type" value="Genomic_DNA"/>
</dbReference>
<dbReference type="RefSeq" id="WP_001818763.1">
    <property type="nucleotide sequence ID" value="NC_012468.1"/>
</dbReference>
<dbReference type="SMR" id="C1C5V0"/>
<dbReference type="GeneID" id="45217940"/>
<dbReference type="KEGG" id="snm:SP70585_0643"/>
<dbReference type="HOGENOM" id="CLU_025086_0_1_9"/>
<dbReference type="Proteomes" id="UP000002211">
    <property type="component" value="Chromosome"/>
</dbReference>
<dbReference type="GO" id="GO:0005737">
    <property type="term" value="C:cytoplasm"/>
    <property type="evidence" value="ECO:0007669"/>
    <property type="project" value="UniProtKB-SubCell"/>
</dbReference>
<dbReference type="GO" id="GO:0005524">
    <property type="term" value="F:ATP binding"/>
    <property type="evidence" value="ECO:0007669"/>
    <property type="project" value="UniProtKB-UniRule"/>
</dbReference>
<dbReference type="GO" id="GO:0140096">
    <property type="term" value="F:catalytic activity, acting on a protein"/>
    <property type="evidence" value="ECO:0007669"/>
    <property type="project" value="UniProtKB-ARBA"/>
</dbReference>
<dbReference type="GO" id="GO:0000287">
    <property type="term" value="F:magnesium ion binding"/>
    <property type="evidence" value="ECO:0007669"/>
    <property type="project" value="UniProtKB-UniRule"/>
</dbReference>
<dbReference type="GO" id="GO:0004826">
    <property type="term" value="F:phenylalanine-tRNA ligase activity"/>
    <property type="evidence" value="ECO:0007669"/>
    <property type="project" value="UniProtKB-UniRule"/>
</dbReference>
<dbReference type="GO" id="GO:0016740">
    <property type="term" value="F:transferase activity"/>
    <property type="evidence" value="ECO:0007669"/>
    <property type="project" value="UniProtKB-ARBA"/>
</dbReference>
<dbReference type="GO" id="GO:0000049">
    <property type="term" value="F:tRNA binding"/>
    <property type="evidence" value="ECO:0007669"/>
    <property type="project" value="InterPro"/>
</dbReference>
<dbReference type="GO" id="GO:0006432">
    <property type="term" value="P:phenylalanyl-tRNA aminoacylation"/>
    <property type="evidence" value="ECO:0007669"/>
    <property type="project" value="UniProtKB-UniRule"/>
</dbReference>
<dbReference type="CDD" id="cd00496">
    <property type="entry name" value="PheRS_alpha_core"/>
    <property type="match status" value="1"/>
</dbReference>
<dbReference type="FunFam" id="3.30.930.10:FF:000003">
    <property type="entry name" value="Phenylalanine--tRNA ligase alpha subunit"/>
    <property type="match status" value="1"/>
</dbReference>
<dbReference type="Gene3D" id="3.30.930.10">
    <property type="entry name" value="Bira Bifunctional Protein, Domain 2"/>
    <property type="match status" value="1"/>
</dbReference>
<dbReference type="HAMAP" id="MF_00281">
    <property type="entry name" value="Phe_tRNA_synth_alpha1"/>
    <property type="match status" value="1"/>
</dbReference>
<dbReference type="InterPro" id="IPR006195">
    <property type="entry name" value="aa-tRNA-synth_II"/>
</dbReference>
<dbReference type="InterPro" id="IPR045864">
    <property type="entry name" value="aa-tRNA-synth_II/BPL/LPL"/>
</dbReference>
<dbReference type="InterPro" id="IPR004529">
    <property type="entry name" value="Phe-tRNA-synth_IIc_asu"/>
</dbReference>
<dbReference type="InterPro" id="IPR004188">
    <property type="entry name" value="Phe-tRNA_ligase_II_N"/>
</dbReference>
<dbReference type="InterPro" id="IPR022911">
    <property type="entry name" value="Phe_tRNA_ligase_alpha1_bac"/>
</dbReference>
<dbReference type="InterPro" id="IPR002319">
    <property type="entry name" value="Phenylalanyl-tRNA_Synthase"/>
</dbReference>
<dbReference type="InterPro" id="IPR010978">
    <property type="entry name" value="tRNA-bd_arm"/>
</dbReference>
<dbReference type="NCBIfam" id="TIGR00468">
    <property type="entry name" value="pheS"/>
    <property type="match status" value="1"/>
</dbReference>
<dbReference type="PANTHER" id="PTHR11538:SF41">
    <property type="entry name" value="PHENYLALANINE--TRNA LIGASE, MITOCHONDRIAL"/>
    <property type="match status" value="1"/>
</dbReference>
<dbReference type="PANTHER" id="PTHR11538">
    <property type="entry name" value="PHENYLALANYL-TRNA SYNTHETASE"/>
    <property type="match status" value="1"/>
</dbReference>
<dbReference type="Pfam" id="PF02912">
    <property type="entry name" value="Phe_tRNA-synt_N"/>
    <property type="match status" value="1"/>
</dbReference>
<dbReference type="Pfam" id="PF01409">
    <property type="entry name" value="tRNA-synt_2d"/>
    <property type="match status" value="1"/>
</dbReference>
<dbReference type="SUPFAM" id="SSF55681">
    <property type="entry name" value="Class II aaRS and biotin synthetases"/>
    <property type="match status" value="1"/>
</dbReference>
<dbReference type="SUPFAM" id="SSF46589">
    <property type="entry name" value="tRNA-binding arm"/>
    <property type="match status" value="1"/>
</dbReference>
<dbReference type="PROSITE" id="PS50862">
    <property type="entry name" value="AA_TRNA_LIGASE_II"/>
    <property type="match status" value="1"/>
</dbReference>
<comment type="catalytic activity">
    <reaction evidence="1">
        <text>tRNA(Phe) + L-phenylalanine + ATP = L-phenylalanyl-tRNA(Phe) + AMP + diphosphate + H(+)</text>
        <dbReference type="Rhea" id="RHEA:19413"/>
        <dbReference type="Rhea" id="RHEA-COMP:9668"/>
        <dbReference type="Rhea" id="RHEA-COMP:9699"/>
        <dbReference type="ChEBI" id="CHEBI:15378"/>
        <dbReference type="ChEBI" id="CHEBI:30616"/>
        <dbReference type="ChEBI" id="CHEBI:33019"/>
        <dbReference type="ChEBI" id="CHEBI:58095"/>
        <dbReference type="ChEBI" id="CHEBI:78442"/>
        <dbReference type="ChEBI" id="CHEBI:78531"/>
        <dbReference type="ChEBI" id="CHEBI:456215"/>
        <dbReference type="EC" id="6.1.1.20"/>
    </reaction>
</comment>
<comment type="cofactor">
    <cofactor evidence="1">
        <name>Mg(2+)</name>
        <dbReference type="ChEBI" id="CHEBI:18420"/>
    </cofactor>
    <text evidence="1">Binds 2 magnesium ions per tetramer.</text>
</comment>
<comment type="subunit">
    <text evidence="1">Tetramer of two alpha and two beta subunits.</text>
</comment>
<comment type="subcellular location">
    <subcellularLocation>
        <location evidence="1">Cytoplasm</location>
    </subcellularLocation>
</comment>
<comment type="similarity">
    <text evidence="1">Belongs to the class-II aminoacyl-tRNA synthetase family. Phe-tRNA synthetase alpha subunit type 1 subfamily.</text>
</comment>
<feature type="chain" id="PRO_1000199327" description="Phenylalanine--tRNA ligase alpha subunit">
    <location>
        <begin position="1"/>
        <end position="348"/>
    </location>
</feature>
<feature type="binding site" evidence="1">
    <location>
        <position position="262"/>
    </location>
    <ligand>
        <name>Mg(2+)</name>
        <dbReference type="ChEBI" id="CHEBI:18420"/>
        <note>shared with beta subunit</note>
    </ligand>
</feature>
<reference key="1">
    <citation type="journal article" date="2010" name="Genome Biol.">
        <title>Structure and dynamics of the pan-genome of Streptococcus pneumoniae and closely related species.</title>
        <authorList>
            <person name="Donati C."/>
            <person name="Hiller N.L."/>
            <person name="Tettelin H."/>
            <person name="Muzzi A."/>
            <person name="Croucher N.J."/>
            <person name="Angiuoli S.V."/>
            <person name="Oggioni M."/>
            <person name="Dunning Hotopp J.C."/>
            <person name="Hu F.Z."/>
            <person name="Riley D.R."/>
            <person name="Covacci A."/>
            <person name="Mitchell T.J."/>
            <person name="Bentley S.D."/>
            <person name="Kilian M."/>
            <person name="Ehrlich G.D."/>
            <person name="Rappuoli R."/>
            <person name="Moxon E.R."/>
            <person name="Masignani V."/>
        </authorList>
    </citation>
    <scope>NUCLEOTIDE SEQUENCE [LARGE SCALE GENOMIC DNA]</scope>
    <source>
        <strain>70585</strain>
    </source>
</reference>
<name>SYFA_STRP7</name>
<proteinExistence type="inferred from homology"/>
<accession>C1C5V0</accession>
<protein>
    <recommendedName>
        <fullName evidence="1">Phenylalanine--tRNA ligase alpha subunit</fullName>
        <ecNumber evidence="1">6.1.1.20</ecNumber>
    </recommendedName>
    <alternativeName>
        <fullName evidence="1">Phenylalanyl-tRNA synthetase alpha subunit</fullName>
        <shortName evidence="1">PheRS</shortName>
    </alternativeName>
</protein>
<sequence>MSTIEEQLKALREETLASLKQITAGNEKEMQDLRVSVLGKKGSLTEILKGMKDVSAEMRPIIGKHVNEARDVLTAAFEETAKLLEEKKVAAQLASESIDVTLPGRPVATGHRHVLTQTSEEIEDIFIGMGYQVVDGFEVEQDYYNFERMNLPKDHPARDMQDTFYITEEILLRTHTSPVQARAMDAHDFSKGPLKMISPGRVFRRDTDDATHSHQFHQIEGLVVGKNISMADLQGTLQLIVQKMFGEERQIRLRPSYFPFTEPSVEVDVSCFKCGGEGCNVCKKTGWIEIMGAGMVHPRVLEMSGIDATVYSGFAFGLGQERVAMLRYGINDIRGFYQGDVRFSEQFK</sequence>
<keyword id="KW-0030">Aminoacyl-tRNA synthetase</keyword>
<keyword id="KW-0067">ATP-binding</keyword>
<keyword id="KW-0963">Cytoplasm</keyword>
<keyword id="KW-0436">Ligase</keyword>
<keyword id="KW-0460">Magnesium</keyword>
<keyword id="KW-0479">Metal-binding</keyword>
<keyword id="KW-0547">Nucleotide-binding</keyword>
<keyword id="KW-0648">Protein biosynthesis</keyword>